<gene>
    <name type="primary">CLPB1</name>
    <name type="synonym">HSP101</name>
    <name type="ordered locus">Os05g0519700</name>
    <name type="ordered locus">LOC_Os05g44340</name>
    <name type="ORF">OsJ_19232</name>
    <name type="ORF">P0483D07.3</name>
    <name type="ORF">P0599F04.13</name>
</gene>
<name>CLPB1_ORYSJ</name>
<evidence type="ECO:0000255" key="1"/>
<evidence type="ECO:0000255" key="2">
    <source>
        <dbReference type="PROSITE-ProRule" id="PRU01251"/>
    </source>
</evidence>
<evidence type="ECO:0000269" key="3">
    <source>
    </source>
</evidence>
<evidence type="ECO:0000269" key="4">
    <source>
    </source>
</evidence>
<evidence type="ECO:0000305" key="5"/>
<comment type="function">
    <text evidence="3">Molecular chaperone involved in heat stress response. May play a role in resolubilization of protein aggregates after heat shock.</text>
</comment>
<comment type="subcellular location">
    <subcellularLocation>
        <location>Cytoplasm</location>
        <location>Cytosol</location>
    </subcellularLocation>
    <subcellularLocation>
        <location evidence="5">Nucleus</location>
    </subcellularLocation>
</comment>
<comment type="developmental stage">
    <text evidence="4">Expressed in developing embryos and dry seeds, and decreases rapidly during seed germination.</text>
</comment>
<comment type="induction">
    <text evidence="3 4">Expressed within five minutes of heat shock at 42 and 45 degrees Celsius in one week-old seedlings. Maximal level of expression after 30 minutes and decrease of expression after four hours at 45 degrees Celsius. No induction detected after salt stress, low temperature, desiccation, or abscisic acid (ABA) treatment. Protein expressed up to 72 hours in Indica rice and up to 96 hours in Japonica rice after a 2 hours heat shock at 42 degrees Celsius.</text>
</comment>
<comment type="similarity">
    <text evidence="5">Belongs to the ClpA/ClpB family.</text>
</comment>
<feature type="chain" id="PRO_0000191221" description="Chaperone protein ClpB1">
    <location>
        <begin position="1"/>
        <end position="912"/>
    </location>
</feature>
<feature type="domain" description="Clp R" evidence="2">
    <location>
        <begin position="3"/>
        <end position="149"/>
    </location>
</feature>
<feature type="region of interest" description="Repeat 1" evidence="2">
    <location>
        <begin position="6"/>
        <end position="75"/>
    </location>
</feature>
<feature type="region of interest" description="Repeat 2" evidence="2">
    <location>
        <begin position="87"/>
        <end position="149"/>
    </location>
</feature>
<feature type="region of interest" description="I">
    <location>
        <begin position="166"/>
        <end position="412"/>
    </location>
</feature>
<feature type="region of interest" description="II">
    <location>
        <begin position="533"/>
        <end position="724"/>
    </location>
</feature>
<feature type="coiled-coil region" evidence="1">
    <location>
        <begin position="406"/>
        <end position="502"/>
    </location>
</feature>
<feature type="binding site" evidence="1">
    <location>
        <begin position="209"/>
        <end position="216"/>
    </location>
    <ligand>
        <name>ATP</name>
        <dbReference type="ChEBI" id="CHEBI:30616"/>
    </ligand>
</feature>
<feature type="binding site" evidence="1">
    <location>
        <begin position="607"/>
        <end position="614"/>
    </location>
    <ligand>
        <name>ATP</name>
        <dbReference type="ChEBI" id="CHEBI:30616"/>
    </ligand>
</feature>
<feature type="sequence conflict" description="In Ref. 1; CAC87117." evidence="5" ref="1">
    <original>D</original>
    <variation>G</variation>
    <location>
        <position position="398"/>
    </location>
</feature>
<feature type="sequence conflict" description="In Ref. 1; CAC87117." evidence="5" ref="1">
    <original>C</original>
    <variation>R</variation>
    <location>
        <position position="401"/>
    </location>
</feature>
<feature type="sequence conflict" description="In Ref. 1; CAC87117." evidence="5" ref="1">
    <original>K</original>
    <variation>E</variation>
    <location>
        <position position="558"/>
    </location>
</feature>
<feature type="sequence conflict" description="In Ref. 1; CAC87117." evidence="5" ref="1">
    <original>F</original>
    <variation>Y</variation>
    <location>
        <position position="678"/>
    </location>
</feature>
<feature type="sequence conflict" description="In Ref. 1; CAC87117." evidence="5" ref="1">
    <original>E</original>
    <variation>G</variation>
    <location>
        <position position="791"/>
    </location>
</feature>
<sequence length="912" mass="100896">MNPDNFTHKTNEALVAAHEIASEAGHAQLTPLHLVAALAADKGGILRQAISQASGGDAGAPDSFERVVSGALKKLPSQSPPPDSVPASTALIKVIRRAQSAQKKRGDSHLAVDQLLLGLLEDSLISDCLKEAGVSAARVRAELEKLRGGEGRKVESASGDTNFQALKTYGRDLVEQAGKLDPVIGRDEEIRRVVRILSRRTKNNPVLIGEPGVGKTAVVEGLAQRIVRGDVPSNLLDVRLIALDMGALVAGAKYRGEFEERLKAVLKEVEEAEGKVILFIDEIHLVLGAGRTEGSMDAANLFKPMLARGQLRCIGATTLEEYRKYVEKDAAFERRFQQVFVAEPSVPDTISILRGLKEKYEGHHGVRIQDRALVVAAQLSARYIMGRHLPDKAIDLVDEACANVRVQLDSQPEEIDNLERKRIQLEVEHHALEKEKDKASKARLVEVKKELDDLRDKLQPLTMKYRKEKERIDEIRKLKQRREELQFTLQEAERRMDLARVADLKYGALQEIDVAIAKLESETGENLMLTETVGPEQIAEVVSRWTGIPVTRLGQNDKERLVGLADRLHQRVVGQAEAVSAVAEAVLRSRAGLGRPQQPTGSFLFLGPTGVGKTELAKALAEQLFDDENLLVRIDMSEYMEQHSVARLIGAPPGYVGHEEGGQLTEQVRRRPYSVILFDEVEKAHVAVFNTLLQVLDDGRLTDGQGRTVDFRNTVIIMTSNLGAEHLLAGMVGKNSMKVARDLVMQEVRRHFRPELLNRLDEIVIFDPLSHEQLRKVARLQMKDVAVRLAERGVALAVTDAALDVILSLSYDPVYGARPIRRWIEKRVVTQLSKMLIQEEIDENCTVYIDAAPHKDELAYRVDNRGGLVNAETGQKSDILIQVPNGAATGSDAAQAVKKMRIMEDEDGMDEE</sequence>
<keyword id="KW-0067">ATP-binding</keyword>
<keyword id="KW-0143">Chaperone</keyword>
<keyword id="KW-0175">Coiled coil</keyword>
<keyword id="KW-0963">Cytoplasm</keyword>
<keyword id="KW-0547">Nucleotide-binding</keyword>
<keyword id="KW-0539">Nucleus</keyword>
<keyword id="KW-1185">Reference proteome</keyword>
<keyword id="KW-0677">Repeat</keyword>
<keyword id="KW-0346">Stress response</keyword>
<organism>
    <name type="scientific">Oryza sativa subsp. japonica</name>
    <name type="common">Rice</name>
    <dbReference type="NCBI Taxonomy" id="39947"/>
    <lineage>
        <taxon>Eukaryota</taxon>
        <taxon>Viridiplantae</taxon>
        <taxon>Streptophyta</taxon>
        <taxon>Embryophyta</taxon>
        <taxon>Tracheophyta</taxon>
        <taxon>Spermatophyta</taxon>
        <taxon>Magnoliopsida</taxon>
        <taxon>Liliopsida</taxon>
        <taxon>Poales</taxon>
        <taxon>Poaceae</taxon>
        <taxon>BOP clade</taxon>
        <taxon>Oryzoideae</taxon>
        <taxon>Oryzeae</taxon>
        <taxon>Oryzinae</taxon>
        <taxon>Oryza</taxon>
        <taxon>Oryza sativa</taxon>
    </lineage>
</organism>
<protein>
    <recommendedName>
        <fullName>Chaperone protein ClpB1</fullName>
    </recommendedName>
    <alternativeName>
        <fullName>ATP-dependent Clp protease ATP-binding subunit ClpB homolog 1</fullName>
    </alternativeName>
    <alternativeName>
        <fullName>Casein lytic proteinase B1</fullName>
    </alternativeName>
    <alternativeName>
        <fullName>Heat shock protein 101</fullName>
    </alternativeName>
</protein>
<proteinExistence type="evidence at transcript level"/>
<dbReference type="EMBL" id="AF332981">
    <property type="protein sequence ID" value="AAL57165.1"/>
    <property type="molecule type" value="mRNA"/>
</dbReference>
<dbReference type="EMBL" id="AJ316025">
    <property type="protein sequence ID" value="CAC87117.1"/>
    <property type="molecule type" value="Genomic_DNA"/>
</dbReference>
<dbReference type="EMBL" id="AC130611">
    <property type="protein sequence ID" value="AAT69657.1"/>
    <property type="molecule type" value="Genomic_DNA"/>
</dbReference>
<dbReference type="EMBL" id="AC132491">
    <property type="protein sequence ID" value="AAU44265.1"/>
    <property type="molecule type" value="Genomic_DNA"/>
</dbReference>
<dbReference type="EMBL" id="AP008211">
    <property type="protein sequence ID" value="BAF17980.1"/>
    <property type="molecule type" value="Genomic_DNA"/>
</dbReference>
<dbReference type="EMBL" id="AP014961">
    <property type="protein sequence ID" value="BAS94924.1"/>
    <property type="molecule type" value="Genomic_DNA"/>
</dbReference>
<dbReference type="EMBL" id="CM000142">
    <property type="protein sequence ID" value="EEE64390.1"/>
    <property type="molecule type" value="Genomic_DNA"/>
</dbReference>
<dbReference type="EMBL" id="AK105433">
    <property type="protein sequence ID" value="BAG97245.1"/>
    <property type="molecule type" value="mRNA"/>
</dbReference>
<dbReference type="RefSeq" id="XP_015640227.1">
    <property type="nucleotide sequence ID" value="XM_015784741.1"/>
</dbReference>
<dbReference type="SMR" id="Q6F2Y7"/>
<dbReference type="FunCoup" id="Q6F2Y7">
    <property type="interactions" value="1557"/>
</dbReference>
<dbReference type="STRING" id="39947.Q6F2Y7"/>
<dbReference type="PaxDb" id="39947-Q6F2Y7"/>
<dbReference type="EnsemblPlants" id="Os05t0519700-01">
    <property type="protein sequence ID" value="Os05t0519700-01"/>
    <property type="gene ID" value="Os05g0519700"/>
</dbReference>
<dbReference type="EnsemblPlants" id="Os05t0519700-02">
    <property type="protein sequence ID" value="Os05t0519700-02"/>
    <property type="gene ID" value="Os05g0519700"/>
</dbReference>
<dbReference type="Gramene" id="Os05t0519700-01">
    <property type="protein sequence ID" value="Os05t0519700-01"/>
    <property type="gene ID" value="Os05g0519700"/>
</dbReference>
<dbReference type="Gramene" id="Os05t0519700-02">
    <property type="protein sequence ID" value="Os05t0519700-02"/>
    <property type="gene ID" value="Os05g0519700"/>
</dbReference>
<dbReference type="KEGG" id="dosa:Os05g0519700"/>
<dbReference type="eggNOG" id="KOG1051">
    <property type="taxonomic scope" value="Eukaryota"/>
</dbReference>
<dbReference type="HOGENOM" id="CLU_005070_4_2_1"/>
<dbReference type="InParanoid" id="Q6F2Y7"/>
<dbReference type="OMA" id="ERMKAVM"/>
<dbReference type="OrthoDB" id="47330at2759"/>
<dbReference type="Proteomes" id="UP000000763">
    <property type="component" value="Chromosome 5"/>
</dbReference>
<dbReference type="Proteomes" id="UP000007752">
    <property type="component" value="Chromosome 5"/>
</dbReference>
<dbReference type="Proteomes" id="UP000059680">
    <property type="component" value="Chromosome 5"/>
</dbReference>
<dbReference type="ExpressionAtlas" id="Q6F2Y7">
    <property type="expression patterns" value="baseline and differential"/>
</dbReference>
<dbReference type="GO" id="GO:0005737">
    <property type="term" value="C:cytoplasm"/>
    <property type="evidence" value="ECO:0000318"/>
    <property type="project" value="GO_Central"/>
</dbReference>
<dbReference type="GO" id="GO:0005829">
    <property type="term" value="C:cytosol"/>
    <property type="evidence" value="ECO:0007669"/>
    <property type="project" value="UniProtKB-SubCell"/>
</dbReference>
<dbReference type="GO" id="GO:0005634">
    <property type="term" value="C:nucleus"/>
    <property type="evidence" value="ECO:0007669"/>
    <property type="project" value="UniProtKB-SubCell"/>
</dbReference>
<dbReference type="GO" id="GO:0005524">
    <property type="term" value="F:ATP binding"/>
    <property type="evidence" value="ECO:0007669"/>
    <property type="project" value="UniProtKB-KW"/>
</dbReference>
<dbReference type="GO" id="GO:0016887">
    <property type="term" value="F:ATP hydrolysis activity"/>
    <property type="evidence" value="ECO:0000318"/>
    <property type="project" value="GO_Central"/>
</dbReference>
<dbReference type="GO" id="GO:0034605">
    <property type="term" value="P:cellular response to heat"/>
    <property type="evidence" value="ECO:0000316"/>
    <property type="project" value="UniProtKB"/>
</dbReference>
<dbReference type="CDD" id="cd00009">
    <property type="entry name" value="AAA"/>
    <property type="match status" value="1"/>
</dbReference>
<dbReference type="CDD" id="cd19499">
    <property type="entry name" value="RecA-like_ClpB_Hsp104-like"/>
    <property type="match status" value="1"/>
</dbReference>
<dbReference type="FunFam" id="1.10.1780.10:FF:000003">
    <property type="entry name" value="ATP-dependent chaperone ClpB"/>
    <property type="match status" value="1"/>
</dbReference>
<dbReference type="FunFam" id="3.40.50.300:FF:000120">
    <property type="entry name" value="ATP-dependent chaperone ClpB"/>
    <property type="match status" value="1"/>
</dbReference>
<dbReference type="FunFam" id="3.40.50.300:FF:000025">
    <property type="entry name" value="ATP-dependent Clp protease subunit"/>
    <property type="match status" value="1"/>
</dbReference>
<dbReference type="FunFam" id="3.40.50.300:FF:000010">
    <property type="entry name" value="Chaperone clpB 1, putative"/>
    <property type="match status" value="1"/>
</dbReference>
<dbReference type="FunFam" id="1.10.8.60:FF:000100">
    <property type="entry name" value="Chaperone protein ClpB1"/>
    <property type="match status" value="1"/>
</dbReference>
<dbReference type="Gene3D" id="1.10.8.60">
    <property type="match status" value="1"/>
</dbReference>
<dbReference type="Gene3D" id="1.10.1780.10">
    <property type="entry name" value="Clp, N-terminal domain"/>
    <property type="match status" value="1"/>
</dbReference>
<dbReference type="Gene3D" id="3.40.50.300">
    <property type="entry name" value="P-loop containing nucleotide triphosphate hydrolases"/>
    <property type="match status" value="3"/>
</dbReference>
<dbReference type="InterPro" id="IPR003593">
    <property type="entry name" value="AAA+_ATPase"/>
</dbReference>
<dbReference type="InterPro" id="IPR003959">
    <property type="entry name" value="ATPase_AAA_core"/>
</dbReference>
<dbReference type="InterPro" id="IPR019489">
    <property type="entry name" value="Clp_ATPase_C"/>
</dbReference>
<dbReference type="InterPro" id="IPR036628">
    <property type="entry name" value="Clp_N_dom_sf"/>
</dbReference>
<dbReference type="InterPro" id="IPR004176">
    <property type="entry name" value="Clp_R_dom"/>
</dbReference>
<dbReference type="InterPro" id="IPR001270">
    <property type="entry name" value="ClpA/B"/>
</dbReference>
<dbReference type="InterPro" id="IPR018368">
    <property type="entry name" value="ClpA/B_CS1"/>
</dbReference>
<dbReference type="InterPro" id="IPR028299">
    <property type="entry name" value="ClpA/B_CS2"/>
</dbReference>
<dbReference type="InterPro" id="IPR041546">
    <property type="entry name" value="ClpA/ClpB_AAA_lid"/>
</dbReference>
<dbReference type="InterPro" id="IPR050130">
    <property type="entry name" value="ClpA_ClpB"/>
</dbReference>
<dbReference type="InterPro" id="IPR027417">
    <property type="entry name" value="P-loop_NTPase"/>
</dbReference>
<dbReference type="PANTHER" id="PTHR11638">
    <property type="entry name" value="ATP-DEPENDENT CLP PROTEASE"/>
    <property type="match status" value="1"/>
</dbReference>
<dbReference type="PANTHER" id="PTHR11638:SF183">
    <property type="entry name" value="CHAPERONE PROTEIN CLPB1"/>
    <property type="match status" value="1"/>
</dbReference>
<dbReference type="Pfam" id="PF00004">
    <property type="entry name" value="AAA"/>
    <property type="match status" value="1"/>
</dbReference>
<dbReference type="Pfam" id="PF07724">
    <property type="entry name" value="AAA_2"/>
    <property type="match status" value="1"/>
</dbReference>
<dbReference type="Pfam" id="PF17871">
    <property type="entry name" value="AAA_lid_9"/>
    <property type="match status" value="1"/>
</dbReference>
<dbReference type="Pfam" id="PF02861">
    <property type="entry name" value="Clp_N"/>
    <property type="match status" value="2"/>
</dbReference>
<dbReference type="Pfam" id="PF10431">
    <property type="entry name" value="ClpB_D2-small"/>
    <property type="match status" value="1"/>
</dbReference>
<dbReference type="PRINTS" id="PR00300">
    <property type="entry name" value="CLPPROTEASEA"/>
</dbReference>
<dbReference type="SMART" id="SM00382">
    <property type="entry name" value="AAA"/>
    <property type="match status" value="2"/>
</dbReference>
<dbReference type="SMART" id="SM01086">
    <property type="entry name" value="ClpB_D2-small"/>
    <property type="match status" value="1"/>
</dbReference>
<dbReference type="SUPFAM" id="SSF81923">
    <property type="entry name" value="Double Clp-N motif"/>
    <property type="match status" value="1"/>
</dbReference>
<dbReference type="SUPFAM" id="SSF52540">
    <property type="entry name" value="P-loop containing nucleoside triphosphate hydrolases"/>
    <property type="match status" value="2"/>
</dbReference>
<dbReference type="PROSITE" id="PS51903">
    <property type="entry name" value="CLP_R"/>
    <property type="match status" value="1"/>
</dbReference>
<dbReference type="PROSITE" id="PS00870">
    <property type="entry name" value="CLPAB_1"/>
    <property type="match status" value="1"/>
</dbReference>
<dbReference type="PROSITE" id="PS00871">
    <property type="entry name" value="CLPAB_2"/>
    <property type="match status" value="1"/>
</dbReference>
<reference key="1">
    <citation type="journal article" date="2003" name="Plant Mol. Biol.">
        <title>Molecular characterization of rice hsp101: complementation of yeast hsp104 mutation by disaggregation of protein granules and differential expression in indica and japonica rice types.</title>
        <authorList>
            <person name="Agarwal M."/>
            <person name="Sahi C."/>
            <person name="Katiyar-Agarwal S."/>
            <person name="Agarwal S."/>
            <person name="Young T."/>
            <person name="Gallie D.R."/>
            <person name="Sharma V.M."/>
            <person name="Ganesan K."/>
            <person name="Grover A."/>
        </authorList>
    </citation>
    <scope>NUCLEOTIDE SEQUENCE [GENOMIC DNA / MRNA]</scope>
    <scope>FUNCTION</scope>
    <scope>INDUCTION</scope>
    <source>
        <strain>cv. Nipponbare</strain>
    </source>
</reference>
<reference key="2">
    <citation type="journal article" date="2005" name="Mol. Genet. Genomics">
        <title>A fine physical map of the rice chromosome 5.</title>
        <authorList>
            <person name="Cheng C.-H."/>
            <person name="Chung M.C."/>
            <person name="Liu S.-M."/>
            <person name="Chen S.-K."/>
            <person name="Kao F.Y."/>
            <person name="Lin S.-J."/>
            <person name="Hsiao S.-H."/>
            <person name="Tseng I.C."/>
            <person name="Hsing Y.-I.C."/>
            <person name="Wu H.-P."/>
            <person name="Chen C.-S."/>
            <person name="Shaw J.-F."/>
            <person name="Wu J."/>
            <person name="Matsumoto T."/>
            <person name="Sasaki T."/>
            <person name="Chen H.-C."/>
            <person name="Chow T.-Y."/>
        </authorList>
    </citation>
    <scope>NUCLEOTIDE SEQUENCE [LARGE SCALE GENOMIC DNA]</scope>
    <source>
        <strain>cv. Nipponbare</strain>
    </source>
</reference>
<reference key="3">
    <citation type="journal article" date="2005" name="Nature">
        <title>The map-based sequence of the rice genome.</title>
        <authorList>
            <consortium name="International rice genome sequencing project (IRGSP)"/>
        </authorList>
    </citation>
    <scope>NUCLEOTIDE SEQUENCE [LARGE SCALE GENOMIC DNA]</scope>
    <source>
        <strain>cv. Nipponbare</strain>
    </source>
</reference>
<reference key="4">
    <citation type="journal article" date="2008" name="Nucleic Acids Res.">
        <title>The rice annotation project database (RAP-DB): 2008 update.</title>
        <authorList>
            <consortium name="The rice annotation project (RAP)"/>
        </authorList>
    </citation>
    <scope>GENOME REANNOTATION</scope>
    <source>
        <strain>cv. Nipponbare</strain>
    </source>
</reference>
<reference key="5">
    <citation type="journal article" date="2013" name="Rice">
        <title>Improvement of the Oryza sativa Nipponbare reference genome using next generation sequence and optical map data.</title>
        <authorList>
            <person name="Kawahara Y."/>
            <person name="de la Bastide M."/>
            <person name="Hamilton J.P."/>
            <person name="Kanamori H."/>
            <person name="McCombie W.R."/>
            <person name="Ouyang S."/>
            <person name="Schwartz D.C."/>
            <person name="Tanaka T."/>
            <person name="Wu J."/>
            <person name="Zhou S."/>
            <person name="Childs K.L."/>
            <person name="Davidson R.M."/>
            <person name="Lin H."/>
            <person name="Quesada-Ocampo L."/>
            <person name="Vaillancourt B."/>
            <person name="Sakai H."/>
            <person name="Lee S.S."/>
            <person name="Kim J."/>
            <person name="Numa H."/>
            <person name="Itoh T."/>
            <person name="Buell C.R."/>
            <person name="Matsumoto T."/>
        </authorList>
    </citation>
    <scope>GENOME REANNOTATION</scope>
    <source>
        <strain>cv. Nipponbare</strain>
    </source>
</reference>
<reference key="6">
    <citation type="journal article" date="2005" name="PLoS Biol.">
        <title>The genomes of Oryza sativa: a history of duplications.</title>
        <authorList>
            <person name="Yu J."/>
            <person name="Wang J."/>
            <person name="Lin W."/>
            <person name="Li S."/>
            <person name="Li H."/>
            <person name="Zhou J."/>
            <person name="Ni P."/>
            <person name="Dong W."/>
            <person name="Hu S."/>
            <person name="Zeng C."/>
            <person name="Zhang J."/>
            <person name="Zhang Y."/>
            <person name="Li R."/>
            <person name="Xu Z."/>
            <person name="Li S."/>
            <person name="Li X."/>
            <person name="Zheng H."/>
            <person name="Cong L."/>
            <person name="Lin L."/>
            <person name="Yin J."/>
            <person name="Geng J."/>
            <person name="Li G."/>
            <person name="Shi J."/>
            <person name="Liu J."/>
            <person name="Lv H."/>
            <person name="Li J."/>
            <person name="Wang J."/>
            <person name="Deng Y."/>
            <person name="Ran L."/>
            <person name="Shi X."/>
            <person name="Wang X."/>
            <person name="Wu Q."/>
            <person name="Li C."/>
            <person name="Ren X."/>
            <person name="Wang J."/>
            <person name="Wang X."/>
            <person name="Li D."/>
            <person name="Liu D."/>
            <person name="Zhang X."/>
            <person name="Ji Z."/>
            <person name="Zhao W."/>
            <person name="Sun Y."/>
            <person name="Zhang Z."/>
            <person name="Bao J."/>
            <person name="Han Y."/>
            <person name="Dong L."/>
            <person name="Ji J."/>
            <person name="Chen P."/>
            <person name="Wu S."/>
            <person name="Liu J."/>
            <person name="Xiao Y."/>
            <person name="Bu D."/>
            <person name="Tan J."/>
            <person name="Yang L."/>
            <person name="Ye C."/>
            <person name="Zhang J."/>
            <person name="Xu J."/>
            <person name="Zhou Y."/>
            <person name="Yu Y."/>
            <person name="Zhang B."/>
            <person name="Zhuang S."/>
            <person name="Wei H."/>
            <person name="Liu B."/>
            <person name="Lei M."/>
            <person name="Yu H."/>
            <person name="Li Y."/>
            <person name="Xu H."/>
            <person name="Wei S."/>
            <person name="He X."/>
            <person name="Fang L."/>
            <person name="Zhang Z."/>
            <person name="Zhang Y."/>
            <person name="Huang X."/>
            <person name="Su Z."/>
            <person name="Tong W."/>
            <person name="Li J."/>
            <person name="Tong Z."/>
            <person name="Li S."/>
            <person name="Ye J."/>
            <person name="Wang L."/>
            <person name="Fang L."/>
            <person name="Lei T."/>
            <person name="Chen C.-S."/>
            <person name="Chen H.-C."/>
            <person name="Xu Z."/>
            <person name="Li H."/>
            <person name="Huang H."/>
            <person name="Zhang F."/>
            <person name="Xu H."/>
            <person name="Li N."/>
            <person name="Zhao C."/>
            <person name="Li S."/>
            <person name="Dong L."/>
            <person name="Huang Y."/>
            <person name="Li L."/>
            <person name="Xi Y."/>
            <person name="Qi Q."/>
            <person name="Li W."/>
            <person name="Zhang B."/>
            <person name="Hu W."/>
            <person name="Zhang Y."/>
            <person name="Tian X."/>
            <person name="Jiao Y."/>
            <person name="Liang X."/>
            <person name="Jin J."/>
            <person name="Gao L."/>
            <person name="Zheng W."/>
            <person name="Hao B."/>
            <person name="Liu S.-M."/>
            <person name="Wang W."/>
            <person name="Yuan L."/>
            <person name="Cao M."/>
            <person name="McDermott J."/>
            <person name="Samudrala R."/>
            <person name="Wang J."/>
            <person name="Wong G.K.-S."/>
            <person name="Yang H."/>
        </authorList>
    </citation>
    <scope>NUCLEOTIDE SEQUENCE [LARGE SCALE GENOMIC DNA]</scope>
    <source>
        <strain>cv. Nipponbare</strain>
    </source>
</reference>
<reference key="7">
    <citation type="journal article" date="2003" name="Science">
        <title>Collection, mapping, and annotation of over 28,000 cDNA clones from japonica rice.</title>
        <authorList>
            <consortium name="The rice full-length cDNA consortium"/>
        </authorList>
    </citation>
    <scope>NUCLEOTIDE SEQUENCE [LARGE SCALE MRNA]</scope>
    <source>
        <strain>cv. Nipponbare</strain>
    </source>
</reference>
<reference key="8">
    <citation type="journal article" date="2010" name="BMC Genomics">
        <title>Genome-wide analysis of rice ClpB/HSP100, ClpC and ClpD genes.</title>
        <authorList>
            <person name="Singh A."/>
            <person name="Singh U."/>
            <person name="Mittal D."/>
            <person name="Grover A."/>
        </authorList>
    </citation>
    <scope>DEVELOPMENTAL STAGE</scope>
    <scope>INDUCTION BY HEAT STRESS</scope>
</reference>
<accession>Q6F2Y7</accession>
<accession>A0A0P0WPL5</accession>
<accession>Q0DGP3</accession>
<accession>Q8L6I4</accession>
<accession>Q8W2B5</accession>